<name>UPPP_VIBVU</name>
<keyword id="KW-0046">Antibiotic resistance</keyword>
<keyword id="KW-0997">Cell inner membrane</keyword>
<keyword id="KW-1003">Cell membrane</keyword>
<keyword id="KW-0133">Cell shape</keyword>
<keyword id="KW-0961">Cell wall biogenesis/degradation</keyword>
<keyword id="KW-0378">Hydrolase</keyword>
<keyword id="KW-0472">Membrane</keyword>
<keyword id="KW-0573">Peptidoglycan synthesis</keyword>
<keyword id="KW-0812">Transmembrane</keyword>
<keyword id="KW-1133">Transmembrane helix</keyword>
<organism>
    <name type="scientific">Vibrio vulnificus (strain CMCP6)</name>
    <dbReference type="NCBI Taxonomy" id="216895"/>
    <lineage>
        <taxon>Bacteria</taxon>
        <taxon>Pseudomonadati</taxon>
        <taxon>Pseudomonadota</taxon>
        <taxon>Gammaproteobacteria</taxon>
        <taxon>Vibrionales</taxon>
        <taxon>Vibrionaceae</taxon>
        <taxon>Vibrio</taxon>
    </lineage>
</organism>
<sequence>MSYFEAFVLALIQGLTEFLPISSSAHLILPSAILGWEDQGLAFDVAVHVGTLAAVVIYFRKEVITLFAALFASIFKGERSKEAKLAWMIVIATIPACIFGLVMKDVIEVYLRSAYVIATTTIIFGLLLWWVDKNASLLDDEYQAGWKKALFIGIAQALAMIPGTSRSGATITAALYLGFTREAAARFSFLMSIPIITLAGSYLGLKLVTSGEPVHVGFLLTGIVTSFISAYLCIHLFLKMISRMGMTPFVIYRLILGVGLFAYLLMA</sequence>
<comment type="function">
    <text evidence="1">Catalyzes the dephosphorylation of undecaprenyl diphosphate (UPP). Confers resistance to bacitracin.</text>
</comment>
<comment type="catalytic activity">
    <reaction evidence="1">
        <text>di-trans,octa-cis-undecaprenyl diphosphate + H2O = di-trans,octa-cis-undecaprenyl phosphate + phosphate + H(+)</text>
        <dbReference type="Rhea" id="RHEA:28094"/>
        <dbReference type="ChEBI" id="CHEBI:15377"/>
        <dbReference type="ChEBI" id="CHEBI:15378"/>
        <dbReference type="ChEBI" id="CHEBI:43474"/>
        <dbReference type="ChEBI" id="CHEBI:58405"/>
        <dbReference type="ChEBI" id="CHEBI:60392"/>
        <dbReference type="EC" id="3.6.1.27"/>
    </reaction>
</comment>
<comment type="subcellular location">
    <subcellularLocation>
        <location evidence="1">Cell inner membrane</location>
        <topology evidence="1">Multi-pass membrane protein</topology>
    </subcellularLocation>
</comment>
<comment type="miscellaneous">
    <text>Bacitracin is thought to be involved in the inhibition of peptidoglycan synthesis by sequestering undecaprenyl diphosphate, thereby reducing the pool of lipid carrier available.</text>
</comment>
<comment type="similarity">
    <text evidence="1">Belongs to the UppP family.</text>
</comment>
<evidence type="ECO:0000255" key="1">
    <source>
        <dbReference type="HAMAP-Rule" id="MF_01006"/>
    </source>
</evidence>
<protein>
    <recommendedName>
        <fullName evidence="1">Undecaprenyl-diphosphatase</fullName>
        <ecNumber evidence="1">3.6.1.27</ecNumber>
    </recommendedName>
    <alternativeName>
        <fullName evidence="1">Bacitracin resistance protein</fullName>
    </alternativeName>
    <alternativeName>
        <fullName evidence="1">Undecaprenyl pyrophosphate phosphatase</fullName>
    </alternativeName>
</protein>
<feature type="chain" id="PRO_0000151237" description="Undecaprenyl-diphosphatase">
    <location>
        <begin position="1"/>
        <end position="267"/>
    </location>
</feature>
<feature type="transmembrane region" description="Helical" evidence="1">
    <location>
        <begin position="1"/>
        <end position="21"/>
    </location>
</feature>
<feature type="transmembrane region" description="Helical" evidence="1">
    <location>
        <begin position="39"/>
        <end position="59"/>
    </location>
</feature>
<feature type="transmembrane region" description="Helical" evidence="1">
    <location>
        <begin position="83"/>
        <end position="103"/>
    </location>
</feature>
<feature type="transmembrane region" description="Helical" evidence="1">
    <location>
        <begin position="111"/>
        <end position="131"/>
    </location>
</feature>
<feature type="transmembrane region" description="Helical" evidence="1">
    <location>
        <begin position="144"/>
        <end position="164"/>
    </location>
</feature>
<feature type="transmembrane region" description="Helical" evidence="1">
    <location>
        <begin position="189"/>
        <end position="209"/>
    </location>
</feature>
<feature type="transmembrane region" description="Helical" evidence="1">
    <location>
        <begin position="218"/>
        <end position="238"/>
    </location>
</feature>
<feature type="transmembrane region" description="Helical" evidence="1">
    <location>
        <begin position="246"/>
        <end position="266"/>
    </location>
</feature>
<dbReference type="EC" id="3.6.1.27" evidence="1"/>
<dbReference type="EMBL" id="AE016795">
    <property type="protein sequence ID" value="AAO09137.1"/>
    <property type="molecule type" value="Genomic_DNA"/>
</dbReference>
<dbReference type="RefSeq" id="WP_011078706.1">
    <property type="nucleotide sequence ID" value="NC_004459.3"/>
</dbReference>
<dbReference type="SMR" id="Q8DEG8"/>
<dbReference type="KEGG" id="vvu:VV1_0623"/>
<dbReference type="HOGENOM" id="CLU_060296_1_0_6"/>
<dbReference type="Proteomes" id="UP000002275">
    <property type="component" value="Chromosome 1"/>
</dbReference>
<dbReference type="GO" id="GO:0005886">
    <property type="term" value="C:plasma membrane"/>
    <property type="evidence" value="ECO:0007669"/>
    <property type="project" value="UniProtKB-SubCell"/>
</dbReference>
<dbReference type="GO" id="GO:0050380">
    <property type="term" value="F:undecaprenyl-diphosphatase activity"/>
    <property type="evidence" value="ECO:0007669"/>
    <property type="project" value="UniProtKB-UniRule"/>
</dbReference>
<dbReference type="GO" id="GO:0071555">
    <property type="term" value="P:cell wall organization"/>
    <property type="evidence" value="ECO:0007669"/>
    <property type="project" value="UniProtKB-KW"/>
</dbReference>
<dbReference type="GO" id="GO:0009252">
    <property type="term" value="P:peptidoglycan biosynthetic process"/>
    <property type="evidence" value="ECO:0007669"/>
    <property type="project" value="UniProtKB-KW"/>
</dbReference>
<dbReference type="GO" id="GO:0008360">
    <property type="term" value="P:regulation of cell shape"/>
    <property type="evidence" value="ECO:0007669"/>
    <property type="project" value="UniProtKB-KW"/>
</dbReference>
<dbReference type="GO" id="GO:0046677">
    <property type="term" value="P:response to antibiotic"/>
    <property type="evidence" value="ECO:0007669"/>
    <property type="project" value="UniProtKB-UniRule"/>
</dbReference>
<dbReference type="HAMAP" id="MF_01006">
    <property type="entry name" value="Undec_diphosphatase"/>
    <property type="match status" value="1"/>
</dbReference>
<dbReference type="InterPro" id="IPR003824">
    <property type="entry name" value="UppP"/>
</dbReference>
<dbReference type="NCBIfam" id="NF001393">
    <property type="entry name" value="PRK00281.2-4"/>
    <property type="match status" value="1"/>
</dbReference>
<dbReference type="NCBIfam" id="TIGR00753">
    <property type="entry name" value="undec_PP_bacA"/>
    <property type="match status" value="1"/>
</dbReference>
<dbReference type="PANTHER" id="PTHR30622">
    <property type="entry name" value="UNDECAPRENYL-DIPHOSPHATASE"/>
    <property type="match status" value="1"/>
</dbReference>
<dbReference type="PANTHER" id="PTHR30622:SF4">
    <property type="entry name" value="UNDECAPRENYL-DIPHOSPHATASE"/>
    <property type="match status" value="1"/>
</dbReference>
<dbReference type="Pfam" id="PF02673">
    <property type="entry name" value="BacA"/>
    <property type="match status" value="1"/>
</dbReference>
<reference key="1">
    <citation type="submission" date="2002-12" db="EMBL/GenBank/DDBJ databases">
        <title>Complete genome sequence of Vibrio vulnificus CMCP6.</title>
        <authorList>
            <person name="Rhee J.H."/>
            <person name="Kim S.Y."/>
            <person name="Chung S.S."/>
            <person name="Kim J.J."/>
            <person name="Moon Y.H."/>
            <person name="Jeong H."/>
            <person name="Choy H.E."/>
        </authorList>
    </citation>
    <scope>NUCLEOTIDE SEQUENCE [LARGE SCALE GENOMIC DNA]</scope>
    <source>
        <strain>CMCP6</strain>
    </source>
</reference>
<accession>Q8DEG8</accession>
<gene>
    <name evidence="1" type="primary">uppP</name>
    <name type="synonym">bacA</name>
    <name type="synonym">upk</name>
    <name type="ordered locus">VV1_0623</name>
</gene>
<proteinExistence type="inferred from homology"/>